<protein>
    <recommendedName>
        <fullName>Protein NRD1</fullName>
    </recommendedName>
</protein>
<name>NRD1_YEAST</name>
<feature type="chain" id="PRO_0000081688" description="Protein NRD1">
    <location>
        <begin position="1"/>
        <end position="575"/>
    </location>
</feature>
<feature type="domain" description="CID" evidence="2">
    <location>
        <begin position="1"/>
        <end position="153"/>
    </location>
</feature>
<feature type="domain" description="RRM" evidence="1">
    <location>
        <begin position="339"/>
        <end position="409"/>
    </location>
</feature>
<feature type="region of interest" description="Disordered" evidence="3">
    <location>
        <begin position="225"/>
        <end position="282"/>
    </location>
</feature>
<feature type="region of interest" description="Disordered" evidence="3">
    <location>
        <begin position="468"/>
        <end position="575"/>
    </location>
</feature>
<feature type="compositionally biased region" description="Basic and acidic residues" evidence="3">
    <location>
        <begin position="244"/>
        <end position="257"/>
    </location>
</feature>
<feature type="compositionally biased region" description="Polar residues" evidence="3">
    <location>
        <begin position="471"/>
        <end position="482"/>
    </location>
</feature>
<feature type="compositionally biased region" description="Polar residues" evidence="3">
    <location>
        <begin position="491"/>
        <end position="501"/>
    </location>
</feature>
<feature type="compositionally biased region" description="Low complexity" evidence="3">
    <location>
        <begin position="517"/>
        <end position="527"/>
    </location>
</feature>
<feature type="compositionally biased region" description="Low complexity" evidence="3">
    <location>
        <begin position="549"/>
        <end position="575"/>
    </location>
</feature>
<feature type="modified residue" description="Phosphoserine" evidence="6 7">
    <location>
        <position position="263"/>
    </location>
</feature>
<feature type="modified residue" description="Phosphoserine" evidence="6 7">
    <location>
        <position position="265"/>
    </location>
</feature>
<feature type="modified residue" description="Phosphoserine" evidence="7">
    <location>
        <position position="271"/>
    </location>
</feature>
<feature type="helix" evidence="8">
    <location>
        <begin position="3"/>
        <end position="5"/>
    </location>
</feature>
<feature type="helix" evidence="13">
    <location>
        <begin position="7"/>
        <end position="15"/>
    </location>
</feature>
<feature type="helix" evidence="13">
    <location>
        <begin position="16"/>
        <end position="19"/>
    </location>
</feature>
<feature type="strand" evidence="13">
    <location>
        <begin position="21"/>
        <end position="23"/>
    </location>
</feature>
<feature type="helix" evidence="13">
    <location>
        <begin position="26"/>
        <end position="38"/>
    </location>
</feature>
<feature type="helix" evidence="13">
    <location>
        <begin position="40"/>
        <end position="42"/>
    </location>
</feature>
<feature type="helix" evidence="13">
    <location>
        <begin position="43"/>
        <end position="56"/>
    </location>
</feature>
<feature type="helix" evidence="13">
    <location>
        <begin position="59"/>
        <end position="61"/>
    </location>
</feature>
<feature type="helix" evidence="13">
    <location>
        <begin position="62"/>
        <end position="83"/>
    </location>
</feature>
<feature type="helix" evidence="12">
    <location>
        <begin position="84"/>
        <end position="86"/>
    </location>
</feature>
<feature type="helix" evidence="13">
    <location>
        <begin position="94"/>
        <end position="115"/>
    </location>
</feature>
<feature type="helix" evidence="13">
    <location>
        <begin position="118"/>
        <end position="134"/>
    </location>
</feature>
<feature type="helix" evidence="13">
    <location>
        <begin position="139"/>
        <end position="149"/>
    </location>
</feature>
<feature type="helix" evidence="14">
    <location>
        <begin position="170"/>
        <end position="179"/>
    </location>
</feature>
<feature type="helix" evidence="14">
    <location>
        <begin position="195"/>
        <end position="198"/>
    </location>
</feature>
<feature type="helix" evidence="14">
    <location>
        <begin position="202"/>
        <end position="221"/>
    </location>
</feature>
<feature type="strand" evidence="11">
    <location>
        <begin position="304"/>
        <end position="306"/>
    </location>
</feature>
<feature type="helix" evidence="10">
    <location>
        <begin position="307"/>
        <end position="309"/>
    </location>
</feature>
<feature type="strand" evidence="11">
    <location>
        <begin position="323"/>
        <end position="325"/>
    </location>
</feature>
<feature type="strand" evidence="11">
    <location>
        <begin position="333"/>
        <end position="337"/>
    </location>
</feature>
<feature type="strand" evidence="11">
    <location>
        <begin position="340"/>
        <end position="344"/>
    </location>
</feature>
<feature type="strand" evidence="9">
    <location>
        <begin position="347"/>
        <end position="350"/>
    </location>
</feature>
<feature type="helix" evidence="11">
    <location>
        <begin position="352"/>
        <end position="359"/>
    </location>
</feature>
<feature type="turn" evidence="11">
    <location>
        <begin position="360"/>
        <end position="362"/>
    </location>
</feature>
<feature type="strand" evidence="11">
    <location>
        <begin position="365"/>
        <end position="371"/>
    </location>
</feature>
<feature type="helix" evidence="11">
    <location>
        <begin position="372"/>
        <end position="374"/>
    </location>
</feature>
<feature type="strand" evidence="11">
    <location>
        <begin position="376"/>
        <end position="382"/>
    </location>
</feature>
<feature type="helix" evidence="11">
    <location>
        <begin position="384"/>
        <end position="393"/>
    </location>
</feature>
<feature type="strand" evidence="11">
    <location>
        <begin position="394"/>
        <end position="397"/>
    </location>
</feature>
<feature type="strand" evidence="11">
    <location>
        <begin position="399"/>
        <end position="401"/>
    </location>
</feature>
<feature type="strand" evidence="11">
    <location>
        <begin position="403"/>
        <end position="406"/>
    </location>
</feature>
<feature type="helix" evidence="11">
    <location>
        <begin position="413"/>
        <end position="415"/>
    </location>
</feature>
<feature type="turn" evidence="11">
    <location>
        <begin position="418"/>
        <end position="421"/>
    </location>
</feature>
<feature type="strand" evidence="11">
    <location>
        <begin position="422"/>
        <end position="426"/>
    </location>
</feature>
<feature type="helix" evidence="11">
    <location>
        <begin position="427"/>
        <end position="429"/>
    </location>
</feature>
<feature type="helix" evidence="11">
    <location>
        <begin position="432"/>
        <end position="440"/>
    </location>
</feature>
<feature type="strand" evidence="11">
    <location>
        <begin position="442"/>
        <end position="445"/>
    </location>
</feature>
<feature type="helix" evidence="9">
    <location>
        <begin position="450"/>
        <end position="453"/>
    </location>
</feature>
<feature type="strand" evidence="11">
    <location>
        <begin position="455"/>
        <end position="458"/>
    </location>
</feature>
<organism>
    <name type="scientific">Saccharomyces cerevisiae (strain ATCC 204508 / S288c)</name>
    <name type="common">Baker's yeast</name>
    <dbReference type="NCBI Taxonomy" id="559292"/>
    <lineage>
        <taxon>Eukaryota</taxon>
        <taxon>Fungi</taxon>
        <taxon>Dikarya</taxon>
        <taxon>Ascomycota</taxon>
        <taxon>Saccharomycotina</taxon>
        <taxon>Saccharomycetes</taxon>
        <taxon>Saccharomycetales</taxon>
        <taxon>Saccharomycetaceae</taxon>
        <taxon>Saccharomyces</taxon>
    </lineage>
</organism>
<gene>
    <name type="primary">NRD1</name>
    <name type="ordered locus">YNL251C</name>
    <name type="ORF">N0868</name>
</gene>
<reference key="1">
    <citation type="journal article" date="1996" name="Mol. Cell. Biol.">
        <title>Repression of gene expression by an exogenous sequence element acting in concert with a heterogeneous nuclear ribonucleoprotein-like protein, Nrd1, and the putative helicase Sen1.</title>
        <authorList>
            <person name="Steinmetz E.J."/>
            <person name="Brow D.A."/>
        </authorList>
    </citation>
    <scope>NUCLEOTIDE SEQUENCE [GENOMIC DNA]</scope>
</reference>
<reference key="2">
    <citation type="journal article" date="1997" name="Yeast">
        <title>Sequence analysis of the 33 kb long region between ORC5 and SUI1 from the left arm of chromosome XIV from Saccharomyces cerevisiae.</title>
        <authorList>
            <person name="Sen-Gupta M."/>
            <person name="Gueldener U."/>
            <person name="Beinhauer J.D."/>
            <person name="Fiedler T.A."/>
            <person name="Hegemann J.H."/>
        </authorList>
    </citation>
    <scope>NUCLEOTIDE SEQUENCE [GENOMIC DNA]</scope>
    <source>
        <strain>ATCC 96604 / S288c / FY1679</strain>
    </source>
</reference>
<reference key="3">
    <citation type="journal article" date="1997" name="Nature">
        <title>The nucleotide sequence of Saccharomyces cerevisiae chromosome XIV and its evolutionary implications.</title>
        <authorList>
            <person name="Philippsen P."/>
            <person name="Kleine K."/>
            <person name="Poehlmann R."/>
            <person name="Duesterhoeft A."/>
            <person name="Hamberg K."/>
            <person name="Hegemann J.H."/>
            <person name="Obermaier B."/>
            <person name="Urrestarazu L.A."/>
            <person name="Aert R."/>
            <person name="Albermann K."/>
            <person name="Altmann R."/>
            <person name="Andre B."/>
            <person name="Baladron V."/>
            <person name="Ballesta J.P.G."/>
            <person name="Becam A.-M."/>
            <person name="Beinhauer J.D."/>
            <person name="Boskovic J."/>
            <person name="Buitrago M.J."/>
            <person name="Bussereau F."/>
            <person name="Coster F."/>
            <person name="Crouzet M."/>
            <person name="D'Angelo M."/>
            <person name="Dal Pero F."/>
            <person name="De Antoni A."/>
            <person name="del Rey F."/>
            <person name="Doignon F."/>
            <person name="Domdey H."/>
            <person name="Dubois E."/>
            <person name="Fiedler T.A."/>
            <person name="Fleig U."/>
            <person name="Floeth M."/>
            <person name="Fritz C."/>
            <person name="Gaillardin C."/>
            <person name="Garcia-Cantalejo J.M."/>
            <person name="Glansdorff N."/>
            <person name="Goffeau A."/>
            <person name="Gueldener U."/>
            <person name="Herbert C.J."/>
            <person name="Heumann K."/>
            <person name="Heuss-Neitzel D."/>
            <person name="Hilbert H."/>
            <person name="Hinni K."/>
            <person name="Iraqui Houssaini I."/>
            <person name="Jacquet M."/>
            <person name="Jimenez A."/>
            <person name="Jonniaux J.-L."/>
            <person name="Karpfinger-Hartl L."/>
            <person name="Lanfranchi G."/>
            <person name="Lepingle A."/>
            <person name="Levesque H."/>
            <person name="Lyck R."/>
            <person name="Maftahi M."/>
            <person name="Mallet L."/>
            <person name="Maurer C.T.C."/>
            <person name="Messenguy F."/>
            <person name="Mewes H.-W."/>
            <person name="Moestl D."/>
            <person name="Nasr F."/>
            <person name="Nicaud J.-M."/>
            <person name="Niedenthal R.K."/>
            <person name="Pandolfo D."/>
            <person name="Pierard A."/>
            <person name="Piravandi E."/>
            <person name="Planta R.J."/>
            <person name="Pohl T.M."/>
            <person name="Purnelle B."/>
            <person name="Rebischung C."/>
            <person name="Remacha M.A."/>
            <person name="Revuelta J.L."/>
            <person name="Rinke M."/>
            <person name="Saiz J.E."/>
            <person name="Sartorello F."/>
            <person name="Scherens B."/>
            <person name="Sen-Gupta M."/>
            <person name="Soler-Mira A."/>
            <person name="Urbanus J.H.M."/>
            <person name="Valle G."/>
            <person name="Van Dyck L."/>
            <person name="Verhasselt P."/>
            <person name="Vierendeels F."/>
            <person name="Vissers S."/>
            <person name="Voet M."/>
            <person name="Volckaert G."/>
            <person name="Wach A."/>
            <person name="Wambutt R."/>
            <person name="Wedler H."/>
            <person name="Zollner A."/>
            <person name="Hani J."/>
        </authorList>
    </citation>
    <scope>NUCLEOTIDE SEQUENCE [LARGE SCALE GENOMIC DNA]</scope>
    <source>
        <strain>ATCC 204508 / S288c</strain>
    </source>
</reference>
<reference key="4">
    <citation type="journal article" date="2014" name="G3 (Bethesda)">
        <title>The reference genome sequence of Saccharomyces cerevisiae: Then and now.</title>
        <authorList>
            <person name="Engel S.R."/>
            <person name="Dietrich F.S."/>
            <person name="Fisk D.G."/>
            <person name="Binkley G."/>
            <person name="Balakrishnan R."/>
            <person name="Costanzo M.C."/>
            <person name="Dwight S.S."/>
            <person name="Hitz B.C."/>
            <person name="Karra K."/>
            <person name="Nash R.S."/>
            <person name="Weng S."/>
            <person name="Wong E.D."/>
            <person name="Lloyd P."/>
            <person name="Skrzypek M.S."/>
            <person name="Miyasato S.R."/>
            <person name="Simison M."/>
            <person name="Cherry J.M."/>
        </authorList>
    </citation>
    <scope>GENOME REANNOTATION</scope>
    <source>
        <strain>ATCC 204508 / S288c</strain>
    </source>
</reference>
<reference key="5">
    <citation type="journal article" date="2003" name="Nature">
        <title>Global analysis of protein expression in yeast.</title>
        <authorList>
            <person name="Ghaemmaghami S."/>
            <person name="Huh W.-K."/>
            <person name="Bower K."/>
            <person name="Howson R.W."/>
            <person name="Belle A."/>
            <person name="Dephoure N."/>
            <person name="O'Shea E.K."/>
            <person name="Weissman J.S."/>
        </authorList>
    </citation>
    <scope>LEVEL OF PROTEIN EXPRESSION [LARGE SCALE ANALYSIS]</scope>
</reference>
<reference key="6">
    <citation type="journal article" date="2007" name="J. Proteome Res.">
        <title>Large-scale phosphorylation analysis of alpha-factor-arrested Saccharomyces cerevisiae.</title>
        <authorList>
            <person name="Li X."/>
            <person name="Gerber S.A."/>
            <person name="Rudner A.D."/>
            <person name="Beausoleil S.A."/>
            <person name="Haas W."/>
            <person name="Villen J."/>
            <person name="Elias J.E."/>
            <person name="Gygi S.P."/>
        </authorList>
    </citation>
    <scope>PHOSPHORYLATION [LARGE SCALE ANALYSIS] AT SER-263 AND SER-265</scope>
    <scope>IDENTIFICATION BY MASS SPECTROMETRY [LARGE SCALE ANALYSIS]</scope>
    <source>
        <strain>ADR376</strain>
    </source>
</reference>
<reference key="7">
    <citation type="journal article" date="2008" name="Mol. Cell. Proteomics">
        <title>A multidimensional chromatography technology for in-depth phosphoproteome analysis.</title>
        <authorList>
            <person name="Albuquerque C.P."/>
            <person name="Smolka M.B."/>
            <person name="Payne S.H."/>
            <person name="Bafna V."/>
            <person name="Eng J."/>
            <person name="Zhou H."/>
        </authorList>
    </citation>
    <scope>IDENTIFICATION BY MASS SPECTROMETRY [LARGE SCALE ANALYSIS]</scope>
</reference>
<reference key="8">
    <citation type="journal article" date="2009" name="Science">
        <title>Global analysis of Cdk1 substrate phosphorylation sites provides insights into evolution.</title>
        <authorList>
            <person name="Holt L.J."/>
            <person name="Tuch B.B."/>
            <person name="Villen J."/>
            <person name="Johnson A.D."/>
            <person name="Gygi S.P."/>
            <person name="Morgan D.O."/>
        </authorList>
    </citation>
    <scope>PHOSPHORYLATION [LARGE SCALE ANALYSIS] AT SER-263; SER-265 AND SER-271</scope>
    <scope>IDENTIFICATION BY MASS SPECTROMETRY [LARGE SCALE ANALYSIS]</scope>
</reference>
<evidence type="ECO:0000255" key="1">
    <source>
        <dbReference type="PROSITE-ProRule" id="PRU00176"/>
    </source>
</evidence>
<evidence type="ECO:0000255" key="2">
    <source>
        <dbReference type="PROSITE-ProRule" id="PRU00724"/>
    </source>
</evidence>
<evidence type="ECO:0000256" key="3">
    <source>
        <dbReference type="SAM" id="MobiDB-lite"/>
    </source>
</evidence>
<evidence type="ECO:0000269" key="4">
    <source>
    </source>
</evidence>
<evidence type="ECO:0000305" key="5"/>
<evidence type="ECO:0007744" key="6">
    <source>
    </source>
</evidence>
<evidence type="ECO:0007744" key="7">
    <source>
    </source>
</evidence>
<evidence type="ECO:0007829" key="8">
    <source>
        <dbReference type="PDB" id="2LO6"/>
    </source>
</evidence>
<evidence type="ECO:0007829" key="9">
    <source>
        <dbReference type="PDB" id="2M88"/>
    </source>
</evidence>
<evidence type="ECO:0007829" key="10">
    <source>
        <dbReference type="PDB" id="5O1W"/>
    </source>
</evidence>
<evidence type="ECO:0007829" key="11">
    <source>
        <dbReference type="PDB" id="5O1X"/>
    </source>
</evidence>
<evidence type="ECO:0007829" key="12">
    <source>
        <dbReference type="PDB" id="6GC3"/>
    </source>
</evidence>
<evidence type="ECO:0007829" key="13">
    <source>
        <dbReference type="PDB" id="6O3X"/>
    </source>
</evidence>
<evidence type="ECO:0007829" key="14">
    <source>
        <dbReference type="PDB" id="7PRD"/>
    </source>
</evidence>
<keyword id="KW-0002">3D-structure</keyword>
<keyword id="KW-0539">Nucleus</keyword>
<keyword id="KW-0597">Phosphoprotein</keyword>
<keyword id="KW-1185">Reference proteome</keyword>
<keyword id="KW-0694">RNA-binding</keyword>
<sequence length="575" mass="63859">MQQDDDFQNFVATLESFKDLKSGISGSRIKKLTTYALDHIDIESKIISLIIDYSRLCPDSHKLGSLYIIDSIGRAYLDETRSNSNSSSNKPGTCAHAINTLGEVIQELLSDAIAKSNQDHKEKIRMLLDIWDRSGLFQKSYLNAIRSKCFAMDISNNTANTASQQLSLDPKQRSKQILSNLKKSPPLNLNISLPTDLTSTDPAKQQAALFQVIAALQKHFKTLPSHTSVGTVAPPQAHTITEYGSRRERERERERYNSRRNRSRSPPAPFSQPSTGRKDRYPSVAQDQYSIGAPNTTFGTNNHHLYPDELNVSNNPHYRPKPVSYDSTLPPDHIKVYSRTLFIGGVPLNMKEWDLANVLKPFAEVQSVILNNSRKHAFVKVYSRHEAENVLQNFNKDGALPLRTRWGVGFGPRDCCDYQHGYSIIPMHRLTDADKKWSVSAQWGGTSGQPLVTGIVFEEPDIIVGEGVSSKAISQKMPTDSGRNGPRSGKPNKSGSISSISPVPYGNAPLASPPPQQYVQPMMQQPYGYAPNQPLPSQGPAAAAPPVPQQQFDPTAQLNSLMNMLNQQQQQQQQS</sequence>
<proteinExistence type="evidence at protein level"/>
<accession>P53617</accession>
<accession>D6W0U2</accession>
<comment type="function">
    <text>Plays a role in sequence-specific regulation of nuclear pre-mRNA abundance.</text>
</comment>
<comment type="interaction">
    <interactant intactId="EBI-12228">
        <id>P53617</id>
    </interactant>
    <interactant intactId="EBI-11776">
        <id>P38996</id>
        <label>NAB3</label>
    </interactant>
    <organismsDiffer>false</organismsDiffer>
    <experiments>8</experiments>
</comment>
<comment type="interaction">
    <interactant intactId="EBI-12228">
        <id>P53617</id>
    </interactant>
    <interactant intactId="EBI-15760">
        <id>P04050</id>
        <label>RPO21</label>
    </interactant>
    <organismsDiffer>false</organismsDiffer>
    <experiments>2</experiments>
</comment>
<comment type="interaction">
    <interactant intactId="EBI-12228">
        <id>P53617</id>
    </interactant>
    <interactant intactId="EBI-1782">
        <id>Q12149</id>
        <label>RRP6</label>
    </interactant>
    <organismsDiffer>false</organismsDiffer>
    <experiments>4</experiments>
</comment>
<comment type="subcellular location">
    <subcellularLocation>
        <location evidence="5">Nucleus</location>
    </subcellularLocation>
</comment>
<comment type="miscellaneous">
    <text evidence="4">Present with 19600 molecules/cell in log phase SD medium.</text>
</comment>
<dbReference type="EMBL" id="U28487">
    <property type="protein sequence ID" value="AAC49568.1"/>
    <property type="molecule type" value="Genomic_DNA"/>
</dbReference>
<dbReference type="EMBL" id="X96722">
    <property type="protein sequence ID" value="CAA65493.1"/>
    <property type="molecule type" value="Genomic_DNA"/>
</dbReference>
<dbReference type="EMBL" id="Z71527">
    <property type="protein sequence ID" value="CAA96158.1"/>
    <property type="molecule type" value="Genomic_DNA"/>
</dbReference>
<dbReference type="EMBL" id="BK006947">
    <property type="protein sequence ID" value="DAA10308.1"/>
    <property type="molecule type" value="Genomic_DNA"/>
</dbReference>
<dbReference type="PIR" id="S59740">
    <property type="entry name" value="S59740"/>
</dbReference>
<dbReference type="RefSeq" id="NP_014148.1">
    <property type="nucleotide sequence ID" value="NM_001183089.1"/>
</dbReference>
<dbReference type="PDB" id="2LO6">
    <property type="method" value="NMR"/>
    <property type="chains" value="A=1-153"/>
</dbReference>
<dbReference type="PDB" id="2M88">
    <property type="method" value="NMR"/>
    <property type="chains" value="A=307-491"/>
</dbReference>
<dbReference type="PDB" id="2MOW">
    <property type="method" value="NMR"/>
    <property type="chains" value="A=1-153"/>
</dbReference>
<dbReference type="PDB" id="3CLJ">
    <property type="method" value="X-ray"/>
    <property type="resolution" value="2.10 A"/>
    <property type="chains" value="A=6-151"/>
</dbReference>
<dbReference type="PDB" id="5O1T">
    <property type="method" value="NMR"/>
    <property type="chains" value="A=290-468"/>
</dbReference>
<dbReference type="PDB" id="5O1W">
    <property type="method" value="X-ray"/>
    <property type="resolution" value="2.30 A"/>
    <property type="chains" value="A=301-489"/>
</dbReference>
<dbReference type="PDB" id="5O1X">
    <property type="method" value="X-ray"/>
    <property type="resolution" value="1.60 A"/>
    <property type="chains" value="A=290-468"/>
</dbReference>
<dbReference type="PDB" id="5O1Y">
    <property type="method" value="X-ray"/>
    <property type="resolution" value="2.45 A"/>
    <property type="chains" value="A=290-468"/>
</dbReference>
<dbReference type="PDB" id="5O1Z">
    <property type="method" value="X-ray"/>
    <property type="resolution" value="3.40 A"/>
    <property type="chains" value="A=290-468"/>
</dbReference>
<dbReference type="PDB" id="5O20">
    <property type="method" value="X-ray"/>
    <property type="resolution" value="3.53 A"/>
    <property type="chains" value="A=290-468"/>
</dbReference>
<dbReference type="PDB" id="6GC3">
    <property type="method" value="NMR"/>
    <property type="chains" value="A=1-153"/>
</dbReference>
<dbReference type="PDB" id="6O3W">
    <property type="method" value="X-ray"/>
    <property type="resolution" value="2.10 A"/>
    <property type="chains" value="A/B=6-156"/>
</dbReference>
<dbReference type="PDB" id="6O3X">
    <property type="method" value="X-ray"/>
    <property type="resolution" value="1.99 A"/>
    <property type="chains" value="A/B/C=6-156"/>
</dbReference>
<dbReference type="PDB" id="6O3Y">
    <property type="method" value="X-ray"/>
    <property type="resolution" value="2.80 A"/>
    <property type="chains" value="A/B/C=6-156"/>
</dbReference>
<dbReference type="PDB" id="7PRD">
    <property type="method" value="NMR"/>
    <property type="chains" value="A=158-222"/>
</dbReference>
<dbReference type="PDBsum" id="2LO6"/>
<dbReference type="PDBsum" id="2M88"/>
<dbReference type="PDBsum" id="2MOW"/>
<dbReference type="PDBsum" id="3CLJ"/>
<dbReference type="PDBsum" id="5O1T"/>
<dbReference type="PDBsum" id="5O1W"/>
<dbReference type="PDBsum" id="5O1X"/>
<dbReference type="PDBsum" id="5O1Y"/>
<dbReference type="PDBsum" id="5O1Z"/>
<dbReference type="PDBsum" id="5O20"/>
<dbReference type="PDBsum" id="6GC3"/>
<dbReference type="PDBsum" id="6O3W"/>
<dbReference type="PDBsum" id="6O3X"/>
<dbReference type="PDBsum" id="6O3Y"/>
<dbReference type="PDBsum" id="7PRD"/>
<dbReference type="BMRB" id="P53617"/>
<dbReference type="SMR" id="P53617"/>
<dbReference type="BioGRID" id="35588">
    <property type="interactions" value="313"/>
</dbReference>
<dbReference type="ComplexPortal" id="CPX-1316">
    <property type="entry name" value="NRD1 snoRNA termination complex"/>
</dbReference>
<dbReference type="DIP" id="DIP-6778N"/>
<dbReference type="ELM" id="P53617"/>
<dbReference type="FunCoup" id="P53617">
    <property type="interactions" value="367"/>
</dbReference>
<dbReference type="IntAct" id="P53617">
    <property type="interactions" value="36"/>
</dbReference>
<dbReference type="MINT" id="P53617"/>
<dbReference type="STRING" id="4932.YNL251C"/>
<dbReference type="iPTMnet" id="P53617"/>
<dbReference type="PaxDb" id="4932-YNL251C"/>
<dbReference type="PeptideAtlas" id="P53617"/>
<dbReference type="EnsemblFungi" id="YNL251C_mRNA">
    <property type="protein sequence ID" value="YNL251C"/>
    <property type="gene ID" value="YNL251C"/>
</dbReference>
<dbReference type="GeneID" id="855470"/>
<dbReference type="KEGG" id="sce:YNL251C"/>
<dbReference type="AGR" id="SGD:S000005195"/>
<dbReference type="SGD" id="S000005195">
    <property type="gene designation" value="NRD1"/>
</dbReference>
<dbReference type="VEuPathDB" id="FungiDB:YNL251C"/>
<dbReference type="eggNOG" id="KOG0132">
    <property type="taxonomic scope" value="Eukaryota"/>
</dbReference>
<dbReference type="GeneTree" id="ENSGT00940000173128"/>
<dbReference type="HOGENOM" id="CLU_016577_1_0_1"/>
<dbReference type="InParanoid" id="P53617"/>
<dbReference type="OMA" id="GIVQTCI"/>
<dbReference type="OrthoDB" id="79367at2759"/>
<dbReference type="BioCyc" id="YEAST:G3O-33248-MONOMER"/>
<dbReference type="BioGRID-ORCS" id="855470">
    <property type="hits" value="8 hits in 10 CRISPR screens"/>
</dbReference>
<dbReference type="CD-CODE" id="E03F929F">
    <property type="entry name" value="Stress granule"/>
</dbReference>
<dbReference type="EvolutionaryTrace" id="P53617"/>
<dbReference type="PRO" id="PR:P53617"/>
<dbReference type="Proteomes" id="UP000002311">
    <property type="component" value="Chromosome XIV"/>
</dbReference>
<dbReference type="RNAct" id="P53617">
    <property type="molecule type" value="protein"/>
</dbReference>
<dbReference type="GO" id="GO:0035649">
    <property type="term" value="C:Nrd1 complex"/>
    <property type="evidence" value="ECO:0000314"/>
    <property type="project" value="SGD"/>
</dbReference>
<dbReference type="GO" id="GO:0005634">
    <property type="term" value="C:nucleus"/>
    <property type="evidence" value="ECO:0000303"/>
    <property type="project" value="ComplexPortal"/>
</dbReference>
<dbReference type="GO" id="GO:0003729">
    <property type="term" value="F:mRNA binding"/>
    <property type="evidence" value="ECO:0007005"/>
    <property type="project" value="SGD"/>
</dbReference>
<dbReference type="GO" id="GO:0019904">
    <property type="term" value="F:protein domain specific binding"/>
    <property type="evidence" value="ECO:0000314"/>
    <property type="project" value="SGD"/>
</dbReference>
<dbReference type="GO" id="GO:0003723">
    <property type="term" value="F:RNA binding"/>
    <property type="evidence" value="ECO:0000314"/>
    <property type="project" value="SGD"/>
</dbReference>
<dbReference type="GO" id="GO:0001068">
    <property type="term" value="F:transcription regulatory region RNA binding"/>
    <property type="evidence" value="ECO:0000314"/>
    <property type="project" value="SGD"/>
</dbReference>
<dbReference type="GO" id="GO:0071041">
    <property type="term" value="P:antisense RNA transcript catabolic process"/>
    <property type="evidence" value="ECO:0000314"/>
    <property type="project" value="SGD"/>
</dbReference>
<dbReference type="GO" id="GO:0071034">
    <property type="term" value="P:CUT catabolic process"/>
    <property type="evidence" value="ECO:0000315"/>
    <property type="project" value="SGD"/>
</dbReference>
<dbReference type="GO" id="GO:0031124">
    <property type="term" value="P:mRNA 3'-end processing"/>
    <property type="evidence" value="ECO:0000315"/>
    <property type="project" value="SGD"/>
</dbReference>
<dbReference type="GO" id="GO:0071028">
    <property type="term" value="P:nuclear mRNA surveillance"/>
    <property type="evidence" value="ECO:0000315"/>
    <property type="project" value="SGD"/>
</dbReference>
<dbReference type="GO" id="GO:0031126">
    <property type="term" value="P:sno(s)RNA 3'-end processing"/>
    <property type="evidence" value="ECO:0000315"/>
    <property type="project" value="SGD"/>
</dbReference>
<dbReference type="GO" id="GO:0034472">
    <property type="term" value="P:snRNA 3'-end processing"/>
    <property type="evidence" value="ECO:0000315"/>
    <property type="project" value="SGD"/>
</dbReference>
<dbReference type="GO" id="GO:0030847">
    <property type="term" value="P:termination of RNA polymerase II transcription, exosome-dependent"/>
    <property type="evidence" value="ECO:0000314"/>
    <property type="project" value="SGD"/>
</dbReference>
<dbReference type="GO" id="GO:0042780">
    <property type="term" value="P:tRNA 3'-end processing"/>
    <property type="evidence" value="ECO:0000315"/>
    <property type="project" value="SGD"/>
</dbReference>
<dbReference type="CDD" id="cd16984">
    <property type="entry name" value="CID_Nrd1_like"/>
    <property type="match status" value="1"/>
</dbReference>
<dbReference type="CDD" id="cd12331">
    <property type="entry name" value="RRM_NRD1_SEB1_like"/>
    <property type="match status" value="1"/>
</dbReference>
<dbReference type="FunFam" id="1.25.40.90:FF:000043">
    <property type="entry name" value="Protein NRD1"/>
    <property type="match status" value="1"/>
</dbReference>
<dbReference type="FunFam" id="3.30.70.330:FF:000397">
    <property type="entry name" value="RNA binding protein Nrd1"/>
    <property type="match status" value="1"/>
</dbReference>
<dbReference type="Gene3D" id="1.25.40.90">
    <property type="match status" value="1"/>
</dbReference>
<dbReference type="Gene3D" id="3.30.70.330">
    <property type="match status" value="1"/>
</dbReference>
<dbReference type="InterPro" id="IPR006569">
    <property type="entry name" value="CID_dom"/>
</dbReference>
<dbReference type="InterPro" id="IPR008942">
    <property type="entry name" value="ENTH_VHS"/>
</dbReference>
<dbReference type="InterPro" id="IPR034894">
    <property type="entry name" value="Nrd1/Seb1_RRM"/>
</dbReference>
<dbReference type="InterPro" id="IPR048892">
    <property type="entry name" value="Nrd1_Seb1_dom2"/>
</dbReference>
<dbReference type="InterPro" id="IPR012677">
    <property type="entry name" value="Nucleotide-bd_a/b_plait_sf"/>
</dbReference>
<dbReference type="InterPro" id="IPR035979">
    <property type="entry name" value="RBD_domain_sf"/>
</dbReference>
<dbReference type="InterPro" id="IPR000504">
    <property type="entry name" value="RRM_dom"/>
</dbReference>
<dbReference type="Pfam" id="PF04818">
    <property type="entry name" value="CID"/>
    <property type="match status" value="1"/>
</dbReference>
<dbReference type="Pfam" id="PF21380">
    <property type="entry name" value="Nrd1-Seb1_dom2"/>
    <property type="match status" value="1"/>
</dbReference>
<dbReference type="Pfam" id="PF00076">
    <property type="entry name" value="RRM_1"/>
    <property type="match status" value="1"/>
</dbReference>
<dbReference type="SMART" id="SM00582">
    <property type="entry name" value="RPR"/>
    <property type="match status" value="1"/>
</dbReference>
<dbReference type="SMART" id="SM00360">
    <property type="entry name" value="RRM"/>
    <property type="match status" value="1"/>
</dbReference>
<dbReference type="SUPFAM" id="SSF48464">
    <property type="entry name" value="ENTH/VHS domain"/>
    <property type="match status" value="1"/>
</dbReference>
<dbReference type="SUPFAM" id="SSF54928">
    <property type="entry name" value="RNA-binding domain, RBD"/>
    <property type="match status" value="1"/>
</dbReference>
<dbReference type="PROSITE" id="PS51391">
    <property type="entry name" value="CID"/>
    <property type="match status" value="1"/>
</dbReference>
<dbReference type="PROSITE" id="PS50102">
    <property type="entry name" value="RRM"/>
    <property type="match status" value="1"/>
</dbReference>